<dbReference type="EMBL" id="CP001321">
    <property type="protein sequence ID" value="ACL31831.1"/>
    <property type="molecule type" value="Genomic_DNA"/>
</dbReference>
<dbReference type="RefSeq" id="WP_010785832.1">
    <property type="nucleotide sequence ID" value="NC_011852.1"/>
</dbReference>
<dbReference type="SMR" id="B8F3C9"/>
<dbReference type="STRING" id="557723.HAPS_0132"/>
<dbReference type="KEGG" id="hap:HAPS_0132"/>
<dbReference type="PATRIC" id="fig|557723.8.peg.137"/>
<dbReference type="HOGENOM" id="CLU_066645_1_0_6"/>
<dbReference type="Proteomes" id="UP000006743">
    <property type="component" value="Chromosome"/>
</dbReference>
<dbReference type="GO" id="GO:0043590">
    <property type="term" value="C:bacterial nucleoid"/>
    <property type="evidence" value="ECO:0007669"/>
    <property type="project" value="TreeGrafter"/>
</dbReference>
<dbReference type="GO" id="GO:0006310">
    <property type="term" value="P:DNA recombination"/>
    <property type="evidence" value="ECO:0007669"/>
    <property type="project" value="UniProtKB-UniRule"/>
</dbReference>
<dbReference type="GO" id="GO:0006302">
    <property type="term" value="P:double-strand break repair"/>
    <property type="evidence" value="ECO:0007669"/>
    <property type="project" value="TreeGrafter"/>
</dbReference>
<dbReference type="Gene3D" id="2.40.50.140">
    <property type="entry name" value="Nucleic acid-binding proteins"/>
    <property type="match status" value="1"/>
</dbReference>
<dbReference type="Gene3D" id="1.20.1440.120">
    <property type="entry name" value="Recombination protein O, C-terminal domain"/>
    <property type="match status" value="1"/>
</dbReference>
<dbReference type="HAMAP" id="MF_00201">
    <property type="entry name" value="RecO"/>
    <property type="match status" value="1"/>
</dbReference>
<dbReference type="InterPro" id="IPR037278">
    <property type="entry name" value="ARFGAP/RecO"/>
</dbReference>
<dbReference type="InterPro" id="IPR022572">
    <property type="entry name" value="DNA_rep/recomb_RecO_N"/>
</dbReference>
<dbReference type="InterPro" id="IPR012340">
    <property type="entry name" value="NA-bd_OB-fold"/>
</dbReference>
<dbReference type="InterPro" id="IPR003717">
    <property type="entry name" value="RecO"/>
</dbReference>
<dbReference type="InterPro" id="IPR042242">
    <property type="entry name" value="RecO_C"/>
</dbReference>
<dbReference type="NCBIfam" id="TIGR00613">
    <property type="entry name" value="reco"/>
    <property type="match status" value="1"/>
</dbReference>
<dbReference type="PANTHER" id="PTHR33991">
    <property type="entry name" value="DNA REPAIR PROTEIN RECO"/>
    <property type="match status" value="1"/>
</dbReference>
<dbReference type="PANTHER" id="PTHR33991:SF1">
    <property type="entry name" value="DNA REPAIR PROTEIN RECO"/>
    <property type="match status" value="1"/>
</dbReference>
<dbReference type="Pfam" id="PF02565">
    <property type="entry name" value="RecO_C"/>
    <property type="match status" value="1"/>
</dbReference>
<dbReference type="Pfam" id="PF11967">
    <property type="entry name" value="RecO_N"/>
    <property type="match status" value="1"/>
</dbReference>
<dbReference type="SUPFAM" id="SSF57863">
    <property type="entry name" value="ArfGap/RecO-like zinc finger"/>
    <property type="match status" value="1"/>
</dbReference>
<dbReference type="SUPFAM" id="SSF50249">
    <property type="entry name" value="Nucleic acid-binding proteins"/>
    <property type="match status" value="1"/>
</dbReference>
<reference key="1">
    <citation type="journal article" date="2009" name="J. Bacteriol.">
        <title>Complete genome sequence of Haemophilus parasuis SH0165.</title>
        <authorList>
            <person name="Yue M."/>
            <person name="Yang F."/>
            <person name="Yang J."/>
            <person name="Bei W."/>
            <person name="Cai X."/>
            <person name="Chen L."/>
            <person name="Dong J."/>
            <person name="Zhou R."/>
            <person name="Jin M."/>
            <person name="Jin Q."/>
            <person name="Chen H."/>
        </authorList>
    </citation>
    <scope>NUCLEOTIDE SEQUENCE [LARGE SCALE GENOMIC DNA]</scope>
    <source>
        <strain>SH0165</strain>
    </source>
</reference>
<organism>
    <name type="scientific">Glaesserella parasuis serovar 5 (strain SH0165)</name>
    <name type="common">Haemophilus parasuis</name>
    <dbReference type="NCBI Taxonomy" id="557723"/>
    <lineage>
        <taxon>Bacteria</taxon>
        <taxon>Pseudomonadati</taxon>
        <taxon>Pseudomonadota</taxon>
        <taxon>Gammaproteobacteria</taxon>
        <taxon>Pasteurellales</taxon>
        <taxon>Pasteurellaceae</taxon>
        <taxon>Glaesserella</taxon>
    </lineage>
</organism>
<evidence type="ECO:0000255" key="1">
    <source>
        <dbReference type="HAMAP-Rule" id="MF_00201"/>
    </source>
</evidence>
<proteinExistence type="inferred from homology"/>
<gene>
    <name evidence="1" type="primary">recO</name>
    <name type="ordered locus">HAPS_0132</name>
</gene>
<feature type="chain" id="PRO_1000193382" description="DNA repair protein RecO">
    <location>
        <begin position="1"/>
        <end position="239"/>
    </location>
</feature>
<keyword id="KW-0227">DNA damage</keyword>
<keyword id="KW-0233">DNA recombination</keyword>
<keyword id="KW-0234">DNA repair</keyword>
<keyword id="KW-1185">Reference proteome</keyword>
<accession>B8F3C9</accession>
<protein>
    <recommendedName>
        <fullName evidence="1">DNA repair protein RecO</fullName>
    </recommendedName>
    <alternativeName>
        <fullName evidence="1">Recombination protein O</fullName>
    </alternativeName>
</protein>
<name>RECO_GLAP5</name>
<sequence length="239" mass="27354">MIEQWQRGFVLHRREYSESSLLVDFFTENHGRITLLAKGVRRPRSPLKSVLQPFTPLLLKWTGKGDLKTLTKAEPASLTLPMQTLALYSGFYVNEVLARVLENHTAYPELFQHYLHCMTKLASQPNEIEPILRTFEFQTLKALGYGVDFCHCAATGKPVDPKMSYQFRENEGFIASLLQNNYTFIGKDLLAFAEMDFSEKETLQSAKRFTRIALKPYLGSAPLKSRELFQSVLPNRLKG</sequence>
<comment type="function">
    <text evidence="1">Involved in DNA repair and RecF pathway recombination.</text>
</comment>
<comment type="similarity">
    <text evidence="1">Belongs to the RecO family.</text>
</comment>